<comment type="function">
    <text evidence="1">Methylation of the membrane-bound methyl-accepting chemotaxis proteins (MCP) to form gamma-glutamyl methyl ester residues in MCP.</text>
</comment>
<comment type="catalytic activity">
    <reaction>
        <text>L-glutamyl-[protein] + S-adenosyl-L-methionine = [protein]-L-glutamate 5-O-methyl ester + S-adenosyl-L-homocysteine</text>
        <dbReference type="Rhea" id="RHEA:24452"/>
        <dbReference type="Rhea" id="RHEA-COMP:10208"/>
        <dbReference type="Rhea" id="RHEA-COMP:10311"/>
        <dbReference type="ChEBI" id="CHEBI:29973"/>
        <dbReference type="ChEBI" id="CHEBI:57856"/>
        <dbReference type="ChEBI" id="CHEBI:59789"/>
        <dbReference type="ChEBI" id="CHEBI:82795"/>
        <dbReference type="EC" id="2.1.1.80"/>
    </reaction>
</comment>
<protein>
    <recommendedName>
        <fullName>Chemotaxis protein methyltransferase</fullName>
        <ecNumber>2.1.1.80</ecNumber>
    </recommendedName>
</protein>
<reference key="1">
    <citation type="journal article" date="2000" name="Nature">
        <title>The genome sequence of the food-borne pathogen Campylobacter jejuni reveals hypervariable sequences.</title>
        <authorList>
            <person name="Parkhill J."/>
            <person name="Wren B.W."/>
            <person name="Mungall K.L."/>
            <person name="Ketley J.M."/>
            <person name="Churcher C.M."/>
            <person name="Basham D."/>
            <person name="Chillingworth T."/>
            <person name="Davies R.M."/>
            <person name="Feltwell T."/>
            <person name="Holroyd S."/>
            <person name="Jagels K."/>
            <person name="Karlyshev A.V."/>
            <person name="Moule S."/>
            <person name="Pallen M.J."/>
            <person name="Penn C.W."/>
            <person name="Quail M.A."/>
            <person name="Rajandream M.A."/>
            <person name="Rutherford K.M."/>
            <person name="van Vliet A.H.M."/>
            <person name="Whitehead S."/>
            <person name="Barrell B.G."/>
        </authorList>
    </citation>
    <scope>NUCLEOTIDE SEQUENCE [LARGE SCALE GENOMIC DNA]</scope>
    <source>
        <strain>ATCC 700819 / NCTC 11168</strain>
    </source>
</reference>
<organism>
    <name type="scientific">Campylobacter jejuni subsp. jejuni serotype O:2 (strain ATCC 700819 / NCTC 11168)</name>
    <dbReference type="NCBI Taxonomy" id="192222"/>
    <lineage>
        <taxon>Bacteria</taxon>
        <taxon>Pseudomonadati</taxon>
        <taxon>Campylobacterota</taxon>
        <taxon>Epsilonproteobacteria</taxon>
        <taxon>Campylobacterales</taxon>
        <taxon>Campylobacteraceae</taxon>
        <taxon>Campylobacter</taxon>
    </lineage>
</organism>
<accession>Q0P9X6</accession>
<accession>P45676</accession>
<accession>Q9PP10</accession>
<gene>
    <name type="primary">cheR</name>
    <name type="ordered locus">Cj0923c</name>
</gene>
<dbReference type="EC" id="2.1.1.80"/>
<dbReference type="EMBL" id="AL111168">
    <property type="protein sequence ID" value="CAL35043.1"/>
    <property type="molecule type" value="Genomic_DNA"/>
</dbReference>
<dbReference type="PIR" id="B48518">
    <property type="entry name" value="B48518"/>
</dbReference>
<dbReference type="PIR" id="B81366">
    <property type="entry name" value="B81366"/>
</dbReference>
<dbReference type="RefSeq" id="WP_002853285.1">
    <property type="nucleotide sequence ID" value="NZ_SZUC01000001.1"/>
</dbReference>
<dbReference type="RefSeq" id="YP_002344321.1">
    <property type="nucleotide sequence ID" value="NC_002163.1"/>
</dbReference>
<dbReference type="SMR" id="Q0P9X6"/>
<dbReference type="IntAct" id="Q0P9X6">
    <property type="interactions" value="1"/>
</dbReference>
<dbReference type="STRING" id="192222.Cj0923c"/>
<dbReference type="PaxDb" id="192222-Cj0923c"/>
<dbReference type="DNASU" id="905222"/>
<dbReference type="EnsemblBacteria" id="CAL35043">
    <property type="protein sequence ID" value="CAL35043"/>
    <property type="gene ID" value="Cj0923c"/>
</dbReference>
<dbReference type="GeneID" id="905222"/>
<dbReference type="KEGG" id="cje:Cj0923c"/>
<dbReference type="PATRIC" id="fig|192222.6.peg.907"/>
<dbReference type="eggNOG" id="COG1352">
    <property type="taxonomic scope" value="Bacteria"/>
</dbReference>
<dbReference type="HOGENOM" id="CLU_025854_0_1_7"/>
<dbReference type="OrthoDB" id="9786165at2"/>
<dbReference type="Proteomes" id="UP000000799">
    <property type="component" value="Chromosome"/>
</dbReference>
<dbReference type="GO" id="GO:0008983">
    <property type="term" value="F:protein-glutamate O-methyltransferase activity"/>
    <property type="evidence" value="ECO:0007669"/>
    <property type="project" value="UniProtKB-EC"/>
</dbReference>
<dbReference type="GO" id="GO:0006935">
    <property type="term" value="P:chemotaxis"/>
    <property type="evidence" value="ECO:0007669"/>
    <property type="project" value="UniProtKB-KW"/>
</dbReference>
<dbReference type="GO" id="GO:0032259">
    <property type="term" value="P:methylation"/>
    <property type="evidence" value="ECO:0007669"/>
    <property type="project" value="UniProtKB-KW"/>
</dbReference>
<dbReference type="CDD" id="cd02440">
    <property type="entry name" value="AdoMet_MTases"/>
    <property type="match status" value="1"/>
</dbReference>
<dbReference type="Gene3D" id="1.10.155.10">
    <property type="entry name" value="Chemotaxis receptor methyltransferase CheR, N-terminal domain"/>
    <property type="match status" value="1"/>
</dbReference>
<dbReference type="Gene3D" id="3.40.50.150">
    <property type="entry name" value="Vaccinia Virus protein VP39"/>
    <property type="match status" value="1"/>
</dbReference>
<dbReference type="InterPro" id="IPR050903">
    <property type="entry name" value="Bact_Chemotaxis_MeTrfase"/>
</dbReference>
<dbReference type="InterPro" id="IPR022642">
    <property type="entry name" value="CheR_C"/>
</dbReference>
<dbReference type="InterPro" id="IPR000780">
    <property type="entry name" value="CheR_MeTrfase"/>
</dbReference>
<dbReference type="InterPro" id="IPR036804">
    <property type="entry name" value="CheR_N_sf"/>
</dbReference>
<dbReference type="InterPro" id="IPR029063">
    <property type="entry name" value="SAM-dependent_MTases_sf"/>
</dbReference>
<dbReference type="PANTHER" id="PTHR24422">
    <property type="entry name" value="CHEMOTAXIS PROTEIN METHYLTRANSFERASE"/>
    <property type="match status" value="1"/>
</dbReference>
<dbReference type="PANTHER" id="PTHR24422:SF19">
    <property type="entry name" value="CHEMOTAXIS PROTEIN METHYLTRANSFERASE"/>
    <property type="match status" value="1"/>
</dbReference>
<dbReference type="Pfam" id="PF01739">
    <property type="entry name" value="CheR"/>
    <property type="match status" value="1"/>
</dbReference>
<dbReference type="PRINTS" id="PR00996">
    <property type="entry name" value="CHERMTFRASE"/>
</dbReference>
<dbReference type="SMART" id="SM00138">
    <property type="entry name" value="MeTrc"/>
    <property type="match status" value="1"/>
</dbReference>
<dbReference type="SUPFAM" id="SSF47757">
    <property type="entry name" value="Chemotaxis receptor methyltransferase CheR, N-terminal domain"/>
    <property type="match status" value="1"/>
</dbReference>
<dbReference type="SUPFAM" id="SSF53335">
    <property type="entry name" value="S-adenosyl-L-methionine-dependent methyltransferases"/>
    <property type="match status" value="1"/>
</dbReference>
<dbReference type="PROSITE" id="PS50123">
    <property type="entry name" value="CHER"/>
    <property type="match status" value="1"/>
</dbReference>
<proteinExistence type="inferred from homology"/>
<name>CHER_CAMJE</name>
<feature type="chain" id="PRO_0000176032" description="Chemotaxis protein methyltransferase">
    <location>
        <begin position="1"/>
        <end position="262"/>
    </location>
</feature>
<feature type="domain" description="CheR-type methyltransferase" evidence="2">
    <location>
        <begin position="1"/>
        <end position="262"/>
    </location>
</feature>
<feature type="binding site" evidence="1">
    <location>
        <position position="76"/>
    </location>
    <ligand>
        <name>S-adenosyl-L-methionine</name>
        <dbReference type="ChEBI" id="CHEBI:59789"/>
    </ligand>
</feature>
<feature type="binding site" evidence="1">
    <location>
        <position position="80"/>
    </location>
    <ligand>
        <name>S-adenosyl-L-methionine</name>
        <dbReference type="ChEBI" id="CHEBI:59789"/>
    </ligand>
</feature>
<feature type="binding site" evidence="1">
    <location>
        <position position="111"/>
    </location>
    <ligand>
        <name>S-adenosyl-L-methionine</name>
        <dbReference type="ChEBI" id="CHEBI:59789"/>
    </ligand>
</feature>
<feature type="binding site" evidence="1">
    <location>
        <position position="133"/>
    </location>
    <ligand>
        <name>S-adenosyl-L-methionine</name>
        <dbReference type="ChEBI" id="CHEBI:59789"/>
    </ligand>
</feature>
<feature type="binding site" evidence="1">
    <location>
        <begin position="188"/>
        <end position="189"/>
    </location>
    <ligand>
        <name>S-adenosyl-L-methionine</name>
        <dbReference type="ChEBI" id="CHEBI:59789"/>
    </ligand>
</feature>
<feature type="binding site" evidence="1">
    <location>
        <begin position="206"/>
        <end position="207"/>
    </location>
    <ligand>
        <name>S-adenosyl-L-methionine</name>
        <dbReference type="ChEBI" id="CHEBI:59789"/>
    </ligand>
</feature>
<keyword id="KW-0145">Chemotaxis</keyword>
<keyword id="KW-0489">Methyltransferase</keyword>
<keyword id="KW-1185">Reference proteome</keyword>
<keyword id="KW-0949">S-adenosyl-L-methionine</keyword>
<keyword id="KW-0808">Transferase</keyword>
<sequence length="262" mass="30655">MEKKITPSELELNEFIKIINEMSGIDLTDKKNILALKLNKFLEGTNTKNFSEFLGKLKSNRQLKQETLDFVTIGETYFLRELAQLKEIIYYAKSLEKRVNILSAPCSSGEEVYSLALLAAQNFIKDMYILGVDINSSVIEKAKLGKYQGRTLQRLSESEKRRFFLESEDKFYTINKNELCTCKFELCNVFEEKFSRLGKFDIIASRNMIIYFDHESKLKLMERFHRILNDKGRLYVGNADLIPETIYFKKIFSPRGVYYEKV</sequence>
<evidence type="ECO:0000250" key="1"/>
<evidence type="ECO:0000255" key="2">
    <source>
        <dbReference type="PROSITE-ProRule" id="PRU00051"/>
    </source>
</evidence>